<dbReference type="EC" id="1.4.3.21" evidence="2"/>
<dbReference type="EC" id="1.4.3.4" evidence="2"/>
<dbReference type="EMBL" id="AY563632">
    <property type="protein sequence ID" value="AAS68020.1"/>
    <property type="molecule type" value="mRNA"/>
</dbReference>
<dbReference type="RefSeq" id="NP_001001640.1">
    <property type="nucleotide sequence ID" value="NM_001001640.1"/>
</dbReference>
<dbReference type="SMR" id="Q6Q2J0"/>
<dbReference type="FunCoup" id="Q6Q2J0">
    <property type="interactions" value="443"/>
</dbReference>
<dbReference type="STRING" id="9823.ENSSSCP00000013044"/>
<dbReference type="PaxDb" id="9823-ENSSSCP00000013044"/>
<dbReference type="PeptideAtlas" id="Q6Q2J0"/>
<dbReference type="GeneID" id="414424"/>
<dbReference type="KEGG" id="ssc:414424"/>
<dbReference type="CTD" id="4128"/>
<dbReference type="eggNOG" id="KOG0029">
    <property type="taxonomic scope" value="Eukaryota"/>
</dbReference>
<dbReference type="InParanoid" id="Q6Q2J0"/>
<dbReference type="OrthoDB" id="7777654at2759"/>
<dbReference type="BRENDA" id="1.4.3.4">
    <property type="organism ID" value="6170"/>
</dbReference>
<dbReference type="Proteomes" id="UP000008227">
    <property type="component" value="Unplaced"/>
</dbReference>
<dbReference type="Proteomes" id="UP000314985">
    <property type="component" value="Unplaced"/>
</dbReference>
<dbReference type="Proteomes" id="UP000694570">
    <property type="component" value="Unplaced"/>
</dbReference>
<dbReference type="Proteomes" id="UP000694571">
    <property type="component" value="Unplaced"/>
</dbReference>
<dbReference type="Proteomes" id="UP000694720">
    <property type="component" value="Unplaced"/>
</dbReference>
<dbReference type="Proteomes" id="UP000694722">
    <property type="component" value="Unplaced"/>
</dbReference>
<dbReference type="Proteomes" id="UP000694723">
    <property type="component" value="Unplaced"/>
</dbReference>
<dbReference type="Proteomes" id="UP000694724">
    <property type="component" value="Unplaced"/>
</dbReference>
<dbReference type="Proteomes" id="UP000694725">
    <property type="component" value="Unplaced"/>
</dbReference>
<dbReference type="Proteomes" id="UP000694726">
    <property type="component" value="Unplaced"/>
</dbReference>
<dbReference type="Proteomes" id="UP000694727">
    <property type="component" value="Unplaced"/>
</dbReference>
<dbReference type="Proteomes" id="UP000694728">
    <property type="component" value="Unplaced"/>
</dbReference>
<dbReference type="GO" id="GO:0005741">
    <property type="term" value="C:mitochondrial outer membrane"/>
    <property type="evidence" value="ECO:0007669"/>
    <property type="project" value="UniProtKB-SubCell"/>
</dbReference>
<dbReference type="GO" id="GO:0005739">
    <property type="term" value="C:mitochondrion"/>
    <property type="evidence" value="ECO:0000318"/>
    <property type="project" value="GO_Central"/>
</dbReference>
<dbReference type="GO" id="GO:0050660">
    <property type="term" value="F:flavin adenine dinucleotide binding"/>
    <property type="evidence" value="ECO:0000318"/>
    <property type="project" value="GO_Central"/>
</dbReference>
<dbReference type="GO" id="GO:0097621">
    <property type="term" value="F:monoamine oxidase activity"/>
    <property type="evidence" value="ECO:0000250"/>
    <property type="project" value="UniProtKB"/>
</dbReference>
<dbReference type="GO" id="GO:0008131">
    <property type="term" value="F:primary methylamine oxidase activity"/>
    <property type="evidence" value="ECO:0000250"/>
    <property type="project" value="UniProtKB"/>
</dbReference>
<dbReference type="GO" id="GO:0006584">
    <property type="term" value="P:catecholamine metabolic process"/>
    <property type="evidence" value="ECO:0007669"/>
    <property type="project" value="UniProtKB-KW"/>
</dbReference>
<dbReference type="Gene3D" id="3.90.660.10">
    <property type="match status" value="2"/>
</dbReference>
<dbReference type="Gene3D" id="6.10.250.130">
    <property type="match status" value="1"/>
</dbReference>
<dbReference type="Gene3D" id="3.50.50.60">
    <property type="entry name" value="FAD/NAD(P)-binding domain"/>
    <property type="match status" value="2"/>
</dbReference>
<dbReference type="InterPro" id="IPR002937">
    <property type="entry name" value="Amino_oxidase"/>
</dbReference>
<dbReference type="InterPro" id="IPR036188">
    <property type="entry name" value="FAD/NAD-bd_sf"/>
</dbReference>
<dbReference type="InterPro" id="IPR001613">
    <property type="entry name" value="Flavin_amine_oxidase"/>
</dbReference>
<dbReference type="InterPro" id="IPR050703">
    <property type="entry name" value="Flavin_MAO"/>
</dbReference>
<dbReference type="PANTHER" id="PTHR43563">
    <property type="entry name" value="AMINE OXIDASE"/>
    <property type="match status" value="1"/>
</dbReference>
<dbReference type="PANTHER" id="PTHR43563:SF11">
    <property type="entry name" value="AMINE OXIDASE [FLAVIN-CONTAINING] A"/>
    <property type="match status" value="1"/>
</dbReference>
<dbReference type="Pfam" id="PF01593">
    <property type="entry name" value="Amino_oxidase"/>
    <property type="match status" value="1"/>
</dbReference>
<dbReference type="PRINTS" id="PR00757">
    <property type="entry name" value="AMINEOXDASEF"/>
</dbReference>
<dbReference type="SUPFAM" id="SSF54373">
    <property type="entry name" value="FAD-linked reductases, C-terminal domain"/>
    <property type="match status" value="1"/>
</dbReference>
<dbReference type="SUPFAM" id="SSF51905">
    <property type="entry name" value="FAD/NAD(P)-binding domain"/>
    <property type="match status" value="1"/>
</dbReference>
<sequence>MERQEKANNAGHMVDVVVIGGGISGLSAAKLLNEYGINVLVLEARDRVGGRTYTVRNENVDYVDVGGAYVGPTQNRILRLSKELGLETYKVNVNECLVQYVKGKSYPFRGAFPPVWNPIAYLDYNNLWRTMDDMGKKIPADAPWESPHAEEWDKMTMKDLIDKICWTKTAKRFASLFVNINVTSEPHEVSALWFLWYVKQCGGTTRIFSVTNGGQERKFVGGSGQVSERIMHLLGDRVKLRCPVTYVDQSGDNIIVETLNHELYECQYVISAIPPTLTAKIHFRPELPSERNQLIQRLPMGAIIKCMMYYKEAFWKKKNYCGCMIIEDEEAPISITLDDTKPDGSLPAIMGFILARKADRLAKVHKEVRKRKICELYAKVLGSQEASHPVHYEEKNWCEEQYSGGCYTAYFPPGIMTQYGRVIRQPVGRIFFAGTETATQWSGYMEGAVEAGERAAREILNALGKVSKKDIWLREPESEDVPAFEITRTFWERNLPSVTGLLKIIGFSTSVTALWLAVYKFRLLTRS</sequence>
<accession>Q6Q2J0</accession>
<organism>
    <name type="scientific">Sus scrofa</name>
    <name type="common">Pig</name>
    <dbReference type="NCBI Taxonomy" id="9823"/>
    <lineage>
        <taxon>Eukaryota</taxon>
        <taxon>Metazoa</taxon>
        <taxon>Chordata</taxon>
        <taxon>Craniata</taxon>
        <taxon>Vertebrata</taxon>
        <taxon>Euteleostomi</taxon>
        <taxon>Mammalia</taxon>
        <taxon>Eutheria</taxon>
        <taxon>Laurasiatheria</taxon>
        <taxon>Artiodactyla</taxon>
        <taxon>Suina</taxon>
        <taxon>Suidae</taxon>
        <taxon>Sus</taxon>
    </lineage>
</organism>
<gene>
    <name evidence="3" type="primary">MAOA</name>
</gene>
<keyword id="KW-0007">Acetylation</keyword>
<keyword id="KW-0128">Catecholamine metabolism</keyword>
<keyword id="KW-0274">FAD</keyword>
<keyword id="KW-0285">Flavoprotein</keyword>
<keyword id="KW-0472">Membrane</keyword>
<keyword id="KW-0496">Mitochondrion</keyword>
<keyword id="KW-1000">Mitochondrion outer membrane</keyword>
<keyword id="KW-0531">Neurotransmitter degradation</keyword>
<keyword id="KW-0560">Oxidoreductase</keyword>
<keyword id="KW-0597">Phosphoprotein</keyword>
<keyword id="KW-1185">Reference proteome</keyword>
<keyword id="KW-0812">Transmembrane</keyword>
<keyword id="KW-1133">Transmembrane helix</keyword>
<name>AOFA_PIG</name>
<proteinExistence type="evidence at transcript level"/>
<reference key="1">
    <citation type="submission" date="2004-03" db="EMBL/GenBank/DDBJ databases">
        <title>Cloning of the porcine MAO-A and -B gene.</title>
        <authorList>
            <person name="Bai C.Y."/>
            <person name="Zhao W."/>
            <person name="Meng H."/>
            <person name="Pan Y.C."/>
        </authorList>
    </citation>
    <scope>NUCLEOTIDE SEQUENCE [MRNA]</scope>
</reference>
<protein>
    <recommendedName>
        <fullName evidence="3">Amine oxidase [flavin-containing] A</fullName>
        <ecNumber evidence="2">1.4.3.21</ecNumber>
        <ecNumber evidence="2">1.4.3.4</ecNumber>
    </recommendedName>
    <alternativeName>
        <fullName>Monoamine oxidase type A</fullName>
        <shortName>MAO-A</shortName>
    </alternativeName>
</protein>
<evidence type="ECO:0000250" key="1"/>
<evidence type="ECO:0000250" key="2">
    <source>
        <dbReference type="UniProtKB" id="P21396"/>
    </source>
</evidence>
<evidence type="ECO:0000250" key="3">
    <source>
        <dbReference type="UniProtKB" id="P21397"/>
    </source>
</evidence>
<evidence type="ECO:0000305" key="4"/>
<comment type="function">
    <text evidence="2">Catalyzes the oxidative deamination of primary and some secondary amine such as neurotransmitters, with concomitant reduction of oxygen to hydrogen peroxide and has important functions in the metabolism of neuroactive and vasoactive amines in the central nervous system and peripheral tissues. Preferentially oxidizes serotonin. Also catalyzes the oxidative deamination of kynuramine to 3-(2-aminophenyl)-3-oxopropanal that can spontaneously condense to 4-hydroxyquinoline.</text>
</comment>
<comment type="catalytic activity">
    <reaction evidence="2">
        <text>a secondary aliphatic amine + O2 + H2O = a primary amine + an aldehyde + H2O2</text>
        <dbReference type="Rhea" id="RHEA:26414"/>
        <dbReference type="ChEBI" id="CHEBI:15377"/>
        <dbReference type="ChEBI" id="CHEBI:15379"/>
        <dbReference type="ChEBI" id="CHEBI:16240"/>
        <dbReference type="ChEBI" id="CHEBI:17478"/>
        <dbReference type="ChEBI" id="CHEBI:58855"/>
        <dbReference type="ChEBI" id="CHEBI:65296"/>
        <dbReference type="EC" id="1.4.3.4"/>
    </reaction>
</comment>
<comment type="catalytic activity">
    <reaction evidence="2">
        <text>a primary methyl amine + O2 + H2O = an aldehyde + H2O2 + NH4(+)</text>
        <dbReference type="Rhea" id="RHEA:16153"/>
        <dbReference type="ChEBI" id="CHEBI:15377"/>
        <dbReference type="ChEBI" id="CHEBI:15379"/>
        <dbReference type="ChEBI" id="CHEBI:16240"/>
        <dbReference type="ChEBI" id="CHEBI:17478"/>
        <dbReference type="ChEBI" id="CHEBI:28938"/>
        <dbReference type="ChEBI" id="CHEBI:228804"/>
        <dbReference type="EC" id="1.4.3.21"/>
    </reaction>
</comment>
<comment type="catalytic activity">
    <reaction evidence="2">
        <text>(R)-adrenaline + O2 + H2O = (R)-3,4-dihydroxymandelaldehyde + methylamine + H2O2</text>
        <dbReference type="Rhea" id="RHEA:51168"/>
        <dbReference type="ChEBI" id="CHEBI:15377"/>
        <dbReference type="ChEBI" id="CHEBI:15379"/>
        <dbReference type="ChEBI" id="CHEBI:16240"/>
        <dbReference type="ChEBI" id="CHEBI:59338"/>
        <dbReference type="ChEBI" id="CHEBI:71406"/>
        <dbReference type="ChEBI" id="CHEBI:180943"/>
    </reaction>
</comment>
<comment type="catalytic activity">
    <reaction evidence="2">
        <text>dopamine + O2 + H2O = 3,4-dihydroxyphenylacetaldehyde + H2O2 + NH4(+)</text>
        <dbReference type="Rhea" id="RHEA:27946"/>
        <dbReference type="ChEBI" id="CHEBI:15377"/>
        <dbReference type="ChEBI" id="CHEBI:15379"/>
        <dbReference type="ChEBI" id="CHEBI:16240"/>
        <dbReference type="ChEBI" id="CHEBI:27978"/>
        <dbReference type="ChEBI" id="CHEBI:28938"/>
        <dbReference type="ChEBI" id="CHEBI:59905"/>
    </reaction>
</comment>
<comment type="catalytic activity">
    <reaction evidence="2">
        <text>tyramine + O2 + H2O = (4-hydroxyphenyl)acetaldehyde + H2O2 + NH4(+)</text>
        <dbReference type="Rhea" id="RHEA:30591"/>
        <dbReference type="ChEBI" id="CHEBI:15377"/>
        <dbReference type="ChEBI" id="CHEBI:15379"/>
        <dbReference type="ChEBI" id="CHEBI:15621"/>
        <dbReference type="ChEBI" id="CHEBI:16240"/>
        <dbReference type="ChEBI" id="CHEBI:28938"/>
        <dbReference type="ChEBI" id="CHEBI:327995"/>
    </reaction>
</comment>
<comment type="catalytic activity">
    <reaction evidence="2">
        <text>(R)-noradrenaline + O2 + H2O = (R)-3,4-dihydroxymandelaldehyde + H2O2 + NH4(+)</text>
        <dbReference type="Rhea" id="RHEA:69076"/>
        <dbReference type="ChEBI" id="CHEBI:15377"/>
        <dbReference type="ChEBI" id="CHEBI:15379"/>
        <dbReference type="ChEBI" id="CHEBI:16240"/>
        <dbReference type="ChEBI" id="CHEBI:28938"/>
        <dbReference type="ChEBI" id="CHEBI:72587"/>
        <dbReference type="ChEBI" id="CHEBI:180943"/>
    </reaction>
</comment>
<comment type="catalytic activity">
    <reaction evidence="2">
        <text>serotonin + O2 + H2O = (5-hydroxyindol-3-yl)acetaldehyde + H2O2 + NH4(+)</text>
        <dbReference type="Rhea" id="RHEA:69072"/>
        <dbReference type="ChEBI" id="CHEBI:15377"/>
        <dbReference type="ChEBI" id="CHEBI:15379"/>
        <dbReference type="ChEBI" id="CHEBI:16240"/>
        <dbReference type="ChEBI" id="CHEBI:28938"/>
        <dbReference type="ChEBI" id="CHEBI:50157"/>
        <dbReference type="ChEBI" id="CHEBI:350546"/>
    </reaction>
</comment>
<comment type="catalytic activity">
    <reaction evidence="2">
        <text>kynuramine + O2 + H2O = 3-(2-aminophenyl)-3-oxopropanal + H2O2 + NH4(+)</text>
        <dbReference type="Rhea" id="RHEA:59596"/>
        <dbReference type="ChEBI" id="CHEBI:15377"/>
        <dbReference type="ChEBI" id="CHEBI:15379"/>
        <dbReference type="ChEBI" id="CHEBI:16240"/>
        <dbReference type="ChEBI" id="CHEBI:28938"/>
        <dbReference type="ChEBI" id="CHEBI:180898"/>
        <dbReference type="ChEBI" id="CHEBI:180899"/>
    </reaction>
    <physiologicalReaction direction="left-to-right" evidence="2">
        <dbReference type="Rhea" id="RHEA:59597"/>
    </physiologicalReaction>
</comment>
<comment type="catalytic activity">
    <reaction evidence="2">
        <text>tryptamine + O2 + H2O = indole-3-acetaldehyde + H2O2 + NH4(+)</text>
        <dbReference type="Rhea" id="RHEA:59416"/>
        <dbReference type="ChEBI" id="CHEBI:15377"/>
        <dbReference type="ChEBI" id="CHEBI:15379"/>
        <dbReference type="ChEBI" id="CHEBI:16240"/>
        <dbReference type="ChEBI" id="CHEBI:18086"/>
        <dbReference type="ChEBI" id="CHEBI:28938"/>
        <dbReference type="ChEBI" id="CHEBI:57887"/>
    </reaction>
</comment>
<comment type="catalytic activity">
    <reaction evidence="2">
        <text>2-phenylethylamine + O2 + H2O = 2-phenylacetaldehyde + H2O2 + NH4(+)</text>
        <dbReference type="Rhea" id="RHEA:25265"/>
        <dbReference type="ChEBI" id="CHEBI:15377"/>
        <dbReference type="ChEBI" id="CHEBI:15379"/>
        <dbReference type="ChEBI" id="CHEBI:16240"/>
        <dbReference type="ChEBI" id="CHEBI:16424"/>
        <dbReference type="ChEBI" id="CHEBI:28938"/>
        <dbReference type="ChEBI" id="CHEBI:225237"/>
    </reaction>
</comment>
<comment type="cofactor">
    <cofactor evidence="3">
        <name>FAD</name>
        <dbReference type="ChEBI" id="CHEBI:57692"/>
    </cofactor>
</comment>
<comment type="subunit">
    <text evidence="3">Monomer, homo- or heterodimer (containing two subunits of similar size). Each subunit contains a covalently bound flavin. Enzymatically active as monomer (By similarity).</text>
</comment>
<comment type="subcellular location">
    <subcellularLocation>
        <location evidence="2">Mitochondrion outer membrane</location>
        <topology evidence="2">Single-pass type IV membrane protein</topology>
        <orientation evidence="2">Cytoplasmic side</orientation>
    </subcellularLocation>
</comment>
<comment type="similarity">
    <text evidence="4">Belongs to the flavin monoamine oxidase family.</text>
</comment>
<feature type="chain" id="PRO_0000099852" description="Amine oxidase [flavin-containing] A">
    <location>
        <begin position="1"/>
        <end position="527"/>
    </location>
</feature>
<feature type="topological domain" description="Cytoplasmic" evidence="1">
    <location>
        <begin position="1"/>
        <end position="497"/>
    </location>
</feature>
<feature type="transmembrane region" description="Helical; Anchor for type IV membrane protein" evidence="1">
    <location>
        <begin position="498"/>
        <end position="518"/>
    </location>
</feature>
<feature type="topological domain" description="Mitochondrial intermembrane" evidence="1">
    <location>
        <begin position="519"/>
        <end position="527"/>
    </location>
</feature>
<feature type="region of interest" description="Interaction with membrane phospholipid headgroups" evidence="1">
    <location>
        <begin position="520"/>
        <end position="522"/>
    </location>
</feature>
<feature type="site" description="Important for substrate specificity" evidence="1">
    <location>
        <position position="335"/>
    </location>
</feature>
<feature type="site" description="Important for catalytic activity" evidence="1">
    <location>
        <position position="374"/>
    </location>
</feature>
<feature type="modified residue" description="N-acetylmethionine" evidence="3">
    <location>
        <position position="1"/>
    </location>
</feature>
<feature type="modified residue" description="Phosphoserine" evidence="2">
    <location>
        <position position="383"/>
    </location>
</feature>
<feature type="modified residue" description="S-8alpha-FAD cysteine" evidence="3">
    <location>
        <position position="406"/>
    </location>
</feature>